<protein>
    <recommendedName>
        <fullName evidence="1">L-aspartate dehydrogenase</fullName>
        <ecNumber evidence="1">1.4.1.21</ecNumber>
    </recommendedName>
</protein>
<comment type="function">
    <text evidence="1">Specifically catalyzes the NAD or NADP-dependent dehydrogenation of L-aspartate to iminoaspartate.</text>
</comment>
<comment type="catalytic activity">
    <reaction evidence="1">
        <text>L-aspartate + NADP(+) + H2O = oxaloacetate + NH4(+) + NADPH + H(+)</text>
        <dbReference type="Rhea" id="RHEA:11784"/>
        <dbReference type="ChEBI" id="CHEBI:15377"/>
        <dbReference type="ChEBI" id="CHEBI:15378"/>
        <dbReference type="ChEBI" id="CHEBI:16452"/>
        <dbReference type="ChEBI" id="CHEBI:28938"/>
        <dbReference type="ChEBI" id="CHEBI:29991"/>
        <dbReference type="ChEBI" id="CHEBI:57783"/>
        <dbReference type="ChEBI" id="CHEBI:58349"/>
        <dbReference type="EC" id="1.4.1.21"/>
    </reaction>
</comment>
<comment type="catalytic activity">
    <reaction evidence="1">
        <text>L-aspartate + NAD(+) + H2O = oxaloacetate + NH4(+) + NADH + H(+)</text>
        <dbReference type="Rhea" id="RHEA:11788"/>
        <dbReference type="ChEBI" id="CHEBI:15377"/>
        <dbReference type="ChEBI" id="CHEBI:15378"/>
        <dbReference type="ChEBI" id="CHEBI:16452"/>
        <dbReference type="ChEBI" id="CHEBI:28938"/>
        <dbReference type="ChEBI" id="CHEBI:29991"/>
        <dbReference type="ChEBI" id="CHEBI:57540"/>
        <dbReference type="ChEBI" id="CHEBI:57945"/>
        <dbReference type="EC" id="1.4.1.21"/>
    </reaction>
</comment>
<comment type="pathway">
    <text evidence="1">Cofactor biosynthesis; NAD(+) biosynthesis; iminoaspartate from L-aspartate (dehydrogenase route): step 1/1.</text>
</comment>
<comment type="miscellaneous">
    <text evidence="1">The iminoaspartate product is unstable in aqueous solution and can decompose to oxaloacetate and ammonia.</text>
</comment>
<comment type="similarity">
    <text evidence="1">Belongs to the L-aspartate dehydrogenase family.</text>
</comment>
<gene>
    <name evidence="1" type="primary">nadX</name>
    <name type="ordered locus">ABBFA_002656</name>
</gene>
<keyword id="KW-0520">NAD</keyword>
<keyword id="KW-0521">NADP</keyword>
<keyword id="KW-0560">Oxidoreductase</keyword>
<keyword id="KW-0662">Pyridine nucleotide biosynthesis</keyword>
<evidence type="ECO:0000255" key="1">
    <source>
        <dbReference type="HAMAP-Rule" id="MF_01265"/>
    </source>
</evidence>
<organism>
    <name type="scientific">Acinetobacter baumannii (strain AB307-0294)</name>
    <dbReference type="NCBI Taxonomy" id="557600"/>
    <lineage>
        <taxon>Bacteria</taxon>
        <taxon>Pseudomonadati</taxon>
        <taxon>Pseudomonadota</taxon>
        <taxon>Gammaproteobacteria</taxon>
        <taxon>Moraxellales</taxon>
        <taxon>Moraxellaceae</taxon>
        <taxon>Acinetobacter</taxon>
        <taxon>Acinetobacter calcoaceticus/baumannii complex</taxon>
    </lineage>
</organism>
<proteinExistence type="inferred from homology"/>
<feature type="chain" id="PRO_1000140081" description="L-aspartate dehydrogenase">
    <location>
        <begin position="1"/>
        <end position="263"/>
    </location>
</feature>
<feature type="active site" evidence="1">
    <location>
        <position position="216"/>
    </location>
</feature>
<feature type="binding site" evidence="1">
    <location>
        <position position="120"/>
    </location>
    <ligand>
        <name>NAD(+)</name>
        <dbReference type="ChEBI" id="CHEBI:57540"/>
    </ligand>
</feature>
<feature type="binding site" evidence="1">
    <location>
        <position position="186"/>
    </location>
    <ligand>
        <name>NAD(+)</name>
        <dbReference type="ChEBI" id="CHEBI:57540"/>
    </ligand>
</feature>
<dbReference type="EC" id="1.4.1.21" evidence="1"/>
<dbReference type="EMBL" id="CP001172">
    <property type="protein sequence ID" value="ACJ56360.1"/>
    <property type="molecule type" value="Genomic_DNA"/>
</dbReference>
<dbReference type="RefSeq" id="WP_000735778.1">
    <property type="nucleotide sequence ID" value="NZ_CP001172.1"/>
</dbReference>
<dbReference type="SMR" id="B7GY04"/>
<dbReference type="HOGENOM" id="CLU_089550_0_0_6"/>
<dbReference type="UniPathway" id="UPA00253">
    <property type="reaction ID" value="UER00456"/>
</dbReference>
<dbReference type="Proteomes" id="UP000006924">
    <property type="component" value="Chromosome"/>
</dbReference>
<dbReference type="GO" id="GO:0033735">
    <property type="term" value="F:aspartate dehydrogenase activity"/>
    <property type="evidence" value="ECO:0007669"/>
    <property type="project" value="UniProtKB-EC"/>
</dbReference>
<dbReference type="GO" id="GO:0051287">
    <property type="term" value="F:NAD binding"/>
    <property type="evidence" value="ECO:0007669"/>
    <property type="project" value="UniProtKB-UniRule"/>
</dbReference>
<dbReference type="GO" id="GO:0050661">
    <property type="term" value="F:NADP binding"/>
    <property type="evidence" value="ECO:0007669"/>
    <property type="project" value="UniProtKB-UniRule"/>
</dbReference>
<dbReference type="GO" id="GO:0016639">
    <property type="term" value="F:oxidoreductase activity, acting on the CH-NH2 group of donors, NAD or NADP as acceptor"/>
    <property type="evidence" value="ECO:0007669"/>
    <property type="project" value="UniProtKB-UniRule"/>
</dbReference>
<dbReference type="GO" id="GO:0009435">
    <property type="term" value="P:NAD biosynthetic process"/>
    <property type="evidence" value="ECO:0007669"/>
    <property type="project" value="UniProtKB-UniRule"/>
</dbReference>
<dbReference type="Gene3D" id="3.30.360.10">
    <property type="entry name" value="Dihydrodipicolinate Reductase, domain 2"/>
    <property type="match status" value="1"/>
</dbReference>
<dbReference type="Gene3D" id="3.40.50.720">
    <property type="entry name" value="NAD(P)-binding Rossmann-like Domain"/>
    <property type="match status" value="1"/>
</dbReference>
<dbReference type="HAMAP" id="MF_01265">
    <property type="entry name" value="NadX"/>
    <property type="match status" value="1"/>
</dbReference>
<dbReference type="InterPro" id="IPR005106">
    <property type="entry name" value="Asp/hSer_DH_NAD-bd"/>
</dbReference>
<dbReference type="InterPro" id="IPR002811">
    <property type="entry name" value="Asp_DH"/>
</dbReference>
<dbReference type="InterPro" id="IPR020626">
    <property type="entry name" value="Asp_DH_prok"/>
</dbReference>
<dbReference type="InterPro" id="IPR011182">
    <property type="entry name" value="L-Asp_DH"/>
</dbReference>
<dbReference type="InterPro" id="IPR036291">
    <property type="entry name" value="NAD(P)-bd_dom_sf"/>
</dbReference>
<dbReference type="NCBIfam" id="NF009827">
    <property type="entry name" value="PRK13303.1-2"/>
    <property type="match status" value="1"/>
</dbReference>
<dbReference type="NCBIfam" id="NF009828">
    <property type="entry name" value="PRK13303.1-3"/>
    <property type="match status" value="1"/>
</dbReference>
<dbReference type="PANTHER" id="PTHR31873:SF6">
    <property type="entry name" value="ASPARTATE DEHYDROGENASE DOMAIN-CONTAINING PROTEIN"/>
    <property type="match status" value="1"/>
</dbReference>
<dbReference type="PANTHER" id="PTHR31873">
    <property type="entry name" value="L-ASPARTATE DEHYDROGENASE-RELATED"/>
    <property type="match status" value="1"/>
</dbReference>
<dbReference type="Pfam" id="PF01958">
    <property type="entry name" value="Asp_DH_C"/>
    <property type="match status" value="1"/>
</dbReference>
<dbReference type="Pfam" id="PF03447">
    <property type="entry name" value="NAD_binding_3"/>
    <property type="match status" value="1"/>
</dbReference>
<dbReference type="PIRSF" id="PIRSF005227">
    <property type="entry name" value="Asp_dh_NAD_syn"/>
    <property type="match status" value="1"/>
</dbReference>
<dbReference type="SUPFAM" id="SSF55347">
    <property type="entry name" value="Glyceraldehyde-3-phosphate dehydrogenase-like, C-terminal domain"/>
    <property type="match status" value="1"/>
</dbReference>
<dbReference type="SUPFAM" id="SSF51735">
    <property type="entry name" value="NAD(P)-binding Rossmann-fold domains"/>
    <property type="match status" value="1"/>
</dbReference>
<accession>B7GY04</accession>
<reference key="1">
    <citation type="journal article" date="2008" name="J. Bacteriol.">
        <title>Comparative genome sequence analysis of multidrug-resistant Acinetobacter baumannii.</title>
        <authorList>
            <person name="Adams M.D."/>
            <person name="Goglin K."/>
            <person name="Molyneaux N."/>
            <person name="Hujer K.M."/>
            <person name="Lavender H."/>
            <person name="Jamison J.J."/>
            <person name="MacDonald I.J."/>
            <person name="Martin K.M."/>
            <person name="Russo T."/>
            <person name="Campagnari A.A."/>
            <person name="Hujer A.M."/>
            <person name="Bonomo R.A."/>
            <person name="Gill S.R."/>
        </authorList>
    </citation>
    <scope>NUCLEOTIDE SEQUENCE [LARGE SCALE GENOMIC DNA]</scope>
    <source>
        <strain>AB307-0294</strain>
    </source>
</reference>
<sequence>MKKLMMIGFGAMAAEVYAHLPQDLQLKWIVVPSRSIEKVQSQVSSDIQVISDIEQCDGTPDYVIEVAGQAAVKEHAQKVLAKGWTIGLISVGTLADSEFLVQLKQTAEKNDAHLHLLAGAIAGIDGISAAKEGGLQKVTYKGCKSPKSWKGSYAEQLVDLDHVSEPTVFFTGTAREAAMKFPANANVAATIALAGLGMDETMVELTVDPTINKNKHTIVAEGGFGQMTIELVGVPLPSNPKTSTLAALSVIRACRNSVEAIQI</sequence>
<name>ASPD_ACIB3</name>